<keyword id="KW-1185">Reference proteome</keyword>
<reference key="1">
    <citation type="journal article" date="1999" name="Microbiology">
        <title>Ribonucleotide reductase (RNR) of Corynebacterium glutamicum ATCC 13032 -- genetic characterization of a second class IV enzyme.</title>
        <authorList>
            <person name="Oehlmann W."/>
            <person name="Auling G."/>
        </authorList>
    </citation>
    <scope>NUCLEOTIDE SEQUENCE [GENOMIC DNA]</scope>
    <source>
        <strain>ATCC 13032 / DSM 20300 / JCM 1318 / BCRC 11384 / CCUG 27702 / LMG 3730 / NBRC 12168 / NCIMB 10025 / NRRL B-2784 / 534</strain>
    </source>
</reference>
<reference key="2">
    <citation type="journal article" date="2003" name="Appl. Microbiol. Biotechnol.">
        <title>The Corynebacterium glutamicum genome: features and impacts on biotechnological processes.</title>
        <authorList>
            <person name="Ikeda M."/>
            <person name="Nakagawa S."/>
        </authorList>
    </citation>
    <scope>NUCLEOTIDE SEQUENCE [LARGE SCALE GENOMIC DNA]</scope>
    <source>
        <strain>ATCC 13032 / DSM 20300 / JCM 1318 / BCRC 11384 / CCUG 27702 / LMG 3730 / NBRC 12168 / NCIMB 10025 / NRRL B-2784 / 534</strain>
    </source>
</reference>
<reference key="3">
    <citation type="journal article" date="2003" name="J. Biotechnol.">
        <title>The complete Corynebacterium glutamicum ATCC 13032 genome sequence and its impact on the production of L-aspartate-derived amino acids and vitamins.</title>
        <authorList>
            <person name="Kalinowski J."/>
            <person name="Bathe B."/>
            <person name="Bartels D."/>
            <person name="Bischoff N."/>
            <person name="Bott M."/>
            <person name="Burkovski A."/>
            <person name="Dusch N."/>
            <person name="Eggeling L."/>
            <person name="Eikmanns B.J."/>
            <person name="Gaigalat L."/>
            <person name="Goesmann A."/>
            <person name="Hartmann M."/>
            <person name="Huthmacher K."/>
            <person name="Kraemer R."/>
            <person name="Linke B."/>
            <person name="McHardy A.C."/>
            <person name="Meyer F."/>
            <person name="Moeckel B."/>
            <person name="Pfefferle W."/>
            <person name="Puehler A."/>
            <person name="Rey D.A."/>
            <person name="Rueckert C."/>
            <person name="Rupp O."/>
            <person name="Sahm H."/>
            <person name="Wendisch V.F."/>
            <person name="Wiegraebe I."/>
            <person name="Tauch A."/>
        </authorList>
    </citation>
    <scope>NUCLEOTIDE SEQUENCE [LARGE SCALE GENOMIC DNA]</scope>
    <source>
        <strain>ATCC 13032 / DSM 20300 / JCM 1318 / BCRC 11384 / CCUG 27702 / LMG 3730 / NBRC 12168 / NCIMB 10025 / NRRL B-2784 / 534</strain>
    </source>
</reference>
<name>NRDI_CORGL</name>
<feature type="chain" id="PRO_0000164312" description="Protein NrdI">
    <location>
        <begin position="1"/>
        <end position="148"/>
    </location>
</feature>
<comment type="function">
    <text evidence="1">Probably involved in ribonucleotide reductase function.</text>
</comment>
<comment type="similarity">
    <text evidence="2">Belongs to the NrdI family.</text>
</comment>
<organism>
    <name type="scientific">Corynebacterium glutamicum (strain ATCC 13032 / DSM 20300 / JCM 1318 / BCRC 11384 / CCUG 27702 / LMG 3730 / NBRC 12168 / NCIMB 10025 / NRRL B-2784 / 534)</name>
    <dbReference type="NCBI Taxonomy" id="196627"/>
    <lineage>
        <taxon>Bacteria</taxon>
        <taxon>Bacillati</taxon>
        <taxon>Actinomycetota</taxon>
        <taxon>Actinomycetes</taxon>
        <taxon>Mycobacteriales</taxon>
        <taxon>Corynebacteriaceae</taxon>
        <taxon>Corynebacterium</taxon>
    </lineage>
</organism>
<evidence type="ECO:0000250" key="1"/>
<evidence type="ECO:0000305" key="2"/>
<sequence length="148" mass="16409">MLIVYFSSATDNTHRFVQKLDLPNVRIPLTRVEEPLKINEPYVLITPTYGGGVSMTGENSRPVPPQVIRFLNDEHNRSFIRAVVAGGNSNFGSDFGLAGEIISKKCKVPYVYRFELMGNEEDVSILRGGLTQNAQALGLEPQEPVTSR</sequence>
<gene>
    <name type="primary">nrdI</name>
    <name type="ordered locus">Cgl2531</name>
    <name type="ordered locus">cg2787</name>
</gene>
<accession>Q9XD64</accession>
<dbReference type="EMBL" id="AF112535">
    <property type="protein sequence ID" value="AAD41035.1"/>
    <property type="molecule type" value="Genomic_DNA"/>
</dbReference>
<dbReference type="EMBL" id="BA000036">
    <property type="protein sequence ID" value="BAB99924.1"/>
    <property type="molecule type" value="Genomic_DNA"/>
</dbReference>
<dbReference type="EMBL" id="BX927155">
    <property type="protein sequence ID" value="CAF21193.1"/>
    <property type="molecule type" value="Genomic_DNA"/>
</dbReference>
<dbReference type="RefSeq" id="NP_601731.1">
    <property type="nucleotide sequence ID" value="NC_003450.3"/>
</dbReference>
<dbReference type="RefSeq" id="WP_003857951.1">
    <property type="nucleotide sequence ID" value="NC_006958.1"/>
</dbReference>
<dbReference type="SMR" id="Q9XD64"/>
<dbReference type="STRING" id="196627.cg2787"/>
<dbReference type="GeneID" id="1020479"/>
<dbReference type="KEGG" id="cgb:cg2787"/>
<dbReference type="KEGG" id="cgl:Cgl2531"/>
<dbReference type="PATRIC" id="fig|196627.13.peg.2464"/>
<dbReference type="eggNOG" id="COG1780">
    <property type="taxonomic scope" value="Bacteria"/>
</dbReference>
<dbReference type="HOGENOM" id="CLU_114845_0_1_11"/>
<dbReference type="OrthoDB" id="350535at2"/>
<dbReference type="BioCyc" id="CORYNE:G18NG-12135-MONOMER"/>
<dbReference type="Proteomes" id="UP000000582">
    <property type="component" value="Chromosome"/>
</dbReference>
<dbReference type="Proteomes" id="UP000001009">
    <property type="component" value="Chromosome"/>
</dbReference>
<dbReference type="GO" id="GO:0010181">
    <property type="term" value="F:FMN binding"/>
    <property type="evidence" value="ECO:0007669"/>
    <property type="project" value="InterPro"/>
</dbReference>
<dbReference type="GO" id="GO:0036211">
    <property type="term" value="P:protein modification process"/>
    <property type="evidence" value="ECO:0007669"/>
    <property type="project" value="InterPro"/>
</dbReference>
<dbReference type="Gene3D" id="3.40.50.360">
    <property type="match status" value="1"/>
</dbReference>
<dbReference type="HAMAP" id="MF_00128">
    <property type="entry name" value="NrdI"/>
    <property type="match status" value="1"/>
</dbReference>
<dbReference type="InterPro" id="IPR029039">
    <property type="entry name" value="Flavoprotein-like_sf"/>
</dbReference>
<dbReference type="InterPro" id="IPR020852">
    <property type="entry name" value="RNR_Ib_NrdI_bac"/>
</dbReference>
<dbReference type="InterPro" id="IPR004465">
    <property type="entry name" value="RNR_NrdI"/>
</dbReference>
<dbReference type="NCBIfam" id="TIGR00333">
    <property type="entry name" value="nrdI"/>
    <property type="match status" value="1"/>
</dbReference>
<dbReference type="PANTHER" id="PTHR37297">
    <property type="entry name" value="PROTEIN NRDI"/>
    <property type="match status" value="1"/>
</dbReference>
<dbReference type="PANTHER" id="PTHR37297:SF1">
    <property type="entry name" value="PROTEIN NRDI"/>
    <property type="match status" value="1"/>
</dbReference>
<dbReference type="Pfam" id="PF07972">
    <property type="entry name" value="Flavodoxin_NdrI"/>
    <property type="match status" value="1"/>
</dbReference>
<dbReference type="PIRSF" id="PIRSF005087">
    <property type="entry name" value="NrdI"/>
    <property type="match status" value="1"/>
</dbReference>
<dbReference type="SUPFAM" id="SSF52218">
    <property type="entry name" value="Flavoproteins"/>
    <property type="match status" value="1"/>
</dbReference>
<proteinExistence type="inferred from homology"/>
<protein>
    <recommendedName>
        <fullName>Protein NrdI</fullName>
    </recommendedName>
</protein>